<name>IMPA3_DANRE</name>
<protein>
    <recommendedName>
        <fullName>Inositol monophosphatase 3</fullName>
        <shortName>IMP 3</shortName>
        <shortName>IMPase 3</shortName>
        <ecNumber>3.1.3.25</ecNumber>
    </recommendedName>
    <alternativeName>
        <fullName>3'(2'), 5'-bisphosphate nucleotidase 2</fullName>
    </alternativeName>
    <alternativeName>
        <fullName>Inositol monophosphatase domain-containing protein 1</fullName>
    </alternativeName>
    <alternativeName>
        <fullName>Inositol-1(or 4)-monophosphatase 3</fullName>
    </alternativeName>
    <alternativeName>
        <fullName>Myo-inositol monophosphatase A3</fullName>
    </alternativeName>
</protein>
<evidence type="ECO:0000250" key="1"/>
<evidence type="ECO:0000255" key="2"/>
<evidence type="ECO:0000305" key="3"/>
<sequence length="341" mass="37432">MAPMGIRLSPLGIAVFCLLGVGVIYHLYAGVLSSRLAFFRQKRTVDLRELLALSIDAAVQGGREVKRIREDNTLEEKSKGKTKEGASEKYTLGDLNSHRKMYYLIKNTFPNIQVNSEEHANAEGEATVWTRMIPEDILAKVSGGKEIPAEKITVWIDPLDATQEYTENLLKYVTTMVCVAVDGEPVIGVIHKPFTGYTVWGFVGEGSNVAPRDSYNTNSPKVIVSRSHAGKVKSFVQTAFGNNTEIIPAGGAGYKALALLNPTDDKQETADIYIHVTYIKKWDICAGDAILKSLGGQMTTLKGEQIDYSGLEGNKGGLLASMKVDHKALVKRLPLWEDNKQ</sequence>
<reference key="1">
    <citation type="submission" date="2005-11" db="EMBL/GenBank/DDBJ databases">
        <authorList>
            <consortium name="NIH - Zebrafish Gene Collection (ZGC) project"/>
        </authorList>
    </citation>
    <scope>NUCLEOTIDE SEQUENCE [LARGE SCALE MRNA]</scope>
    <source>
        <tissue>Testis</tissue>
    </source>
</reference>
<dbReference type="EC" id="3.1.3.25"/>
<dbReference type="EMBL" id="BC110106">
    <property type="protein sequence ID" value="AAI10107.1"/>
    <property type="molecule type" value="mRNA"/>
</dbReference>
<dbReference type="RefSeq" id="NP_001032657.1">
    <property type="nucleotide sequence ID" value="NM_001037568.2"/>
</dbReference>
<dbReference type="SMR" id="Q2YDR3"/>
<dbReference type="FunCoup" id="Q2YDR3">
    <property type="interactions" value="817"/>
</dbReference>
<dbReference type="STRING" id="7955.ENSDARP00000075369"/>
<dbReference type="PaxDb" id="7955-ENSDARP00000075369"/>
<dbReference type="Ensembl" id="ENSDART00000080925">
    <property type="protein sequence ID" value="ENSDARP00000075369"/>
    <property type="gene ID" value="ENSDARG00000058114"/>
</dbReference>
<dbReference type="GeneID" id="641570"/>
<dbReference type="KEGG" id="dre:641570"/>
<dbReference type="AGR" id="ZFIN:ZDB-GENE-051127-23"/>
<dbReference type="CTD" id="54928"/>
<dbReference type="ZFIN" id="ZDB-GENE-051127-23">
    <property type="gene designation" value="bpnt2"/>
</dbReference>
<dbReference type="eggNOG" id="KOG3853">
    <property type="taxonomic scope" value="Eukaryota"/>
</dbReference>
<dbReference type="HOGENOM" id="CLU_034742_0_0_1"/>
<dbReference type="InParanoid" id="Q2YDR3"/>
<dbReference type="OMA" id="VKQVAWQ"/>
<dbReference type="OrthoDB" id="74460at2759"/>
<dbReference type="PhylomeDB" id="Q2YDR3"/>
<dbReference type="TreeFam" id="TF314300"/>
<dbReference type="Reactome" id="R-DRE-156584">
    <property type="pathway name" value="Cytosolic sulfonation of small molecules"/>
</dbReference>
<dbReference type="UniPathway" id="UPA00823">
    <property type="reaction ID" value="UER00788"/>
</dbReference>
<dbReference type="PRO" id="PR:Q2YDR3"/>
<dbReference type="Proteomes" id="UP000000437">
    <property type="component" value="Chromosome 2"/>
</dbReference>
<dbReference type="Bgee" id="ENSDARG00000058114">
    <property type="expression patterns" value="Expressed in intestine and 22 other cell types or tissues"/>
</dbReference>
<dbReference type="GO" id="GO:0012505">
    <property type="term" value="C:endomembrane system"/>
    <property type="evidence" value="ECO:0000318"/>
    <property type="project" value="GO_Central"/>
</dbReference>
<dbReference type="GO" id="GO:0016020">
    <property type="term" value="C:membrane"/>
    <property type="evidence" value="ECO:0007669"/>
    <property type="project" value="UniProtKB-SubCell"/>
</dbReference>
<dbReference type="GO" id="GO:0008254">
    <property type="term" value="F:3'-nucleotidase activity"/>
    <property type="evidence" value="ECO:0000318"/>
    <property type="project" value="GO_Central"/>
</dbReference>
<dbReference type="GO" id="GO:0052834">
    <property type="term" value="F:inositol monophosphate phosphatase activity"/>
    <property type="evidence" value="ECO:0007669"/>
    <property type="project" value="UniProtKB-EC"/>
</dbReference>
<dbReference type="GO" id="GO:0046872">
    <property type="term" value="F:metal ion binding"/>
    <property type="evidence" value="ECO:0007669"/>
    <property type="project" value="UniProtKB-KW"/>
</dbReference>
<dbReference type="GO" id="GO:0006021">
    <property type="term" value="P:inositol biosynthetic process"/>
    <property type="evidence" value="ECO:0007669"/>
    <property type="project" value="UniProtKB-UniPathway"/>
</dbReference>
<dbReference type="GO" id="GO:0046854">
    <property type="term" value="P:phosphatidylinositol phosphate biosynthetic process"/>
    <property type="evidence" value="ECO:0007669"/>
    <property type="project" value="InterPro"/>
</dbReference>
<dbReference type="CDD" id="cd01640">
    <property type="entry name" value="IPPase"/>
    <property type="match status" value="1"/>
</dbReference>
<dbReference type="FunFam" id="3.30.540.10:FF:000012">
    <property type="entry name" value="Blast:Putative inositol monophosphatase 3"/>
    <property type="match status" value="1"/>
</dbReference>
<dbReference type="FunFam" id="3.40.190.80:FF:000007">
    <property type="entry name" value="Blast:Putative inositol monophosphatase 3"/>
    <property type="match status" value="1"/>
</dbReference>
<dbReference type="Gene3D" id="3.40.190.80">
    <property type="match status" value="1"/>
</dbReference>
<dbReference type="Gene3D" id="3.30.540.10">
    <property type="entry name" value="Fructose-1,6-Bisphosphatase, subunit A, domain 1"/>
    <property type="match status" value="1"/>
</dbReference>
<dbReference type="InterPro" id="IPR050725">
    <property type="entry name" value="CysQ/Inositol_MonoPase"/>
</dbReference>
<dbReference type="InterPro" id="IPR000760">
    <property type="entry name" value="Inositol_monophosphatase-like"/>
</dbReference>
<dbReference type="InterPro" id="IPR020550">
    <property type="entry name" value="Inositol_monophosphatase_CS"/>
</dbReference>
<dbReference type="PANTHER" id="PTHR43028">
    <property type="entry name" value="3'(2'),5'-BISPHOSPHATE NUCLEOTIDASE 1"/>
    <property type="match status" value="1"/>
</dbReference>
<dbReference type="PANTHER" id="PTHR43028:SF4">
    <property type="entry name" value="INOSITOL MONOPHOSPHATASE 3"/>
    <property type="match status" value="1"/>
</dbReference>
<dbReference type="Pfam" id="PF00459">
    <property type="entry name" value="Inositol_P"/>
    <property type="match status" value="1"/>
</dbReference>
<dbReference type="SUPFAM" id="SSF56655">
    <property type="entry name" value="Carbohydrate phosphatase"/>
    <property type="match status" value="1"/>
</dbReference>
<dbReference type="PROSITE" id="PS00630">
    <property type="entry name" value="IMP_2"/>
    <property type="match status" value="1"/>
</dbReference>
<keyword id="KW-0378">Hydrolase</keyword>
<keyword id="KW-0460">Magnesium</keyword>
<keyword id="KW-0472">Membrane</keyword>
<keyword id="KW-0479">Metal-binding</keyword>
<keyword id="KW-1185">Reference proteome</keyword>
<keyword id="KW-0812">Transmembrane</keyword>
<keyword id="KW-1133">Transmembrane helix</keyword>
<proteinExistence type="evidence at transcript level"/>
<comment type="catalytic activity">
    <reaction>
        <text>a myo-inositol phosphate + H2O = myo-inositol + phosphate</text>
        <dbReference type="Rhea" id="RHEA:24056"/>
        <dbReference type="ChEBI" id="CHEBI:15377"/>
        <dbReference type="ChEBI" id="CHEBI:17268"/>
        <dbReference type="ChEBI" id="CHEBI:43474"/>
        <dbReference type="ChEBI" id="CHEBI:84139"/>
        <dbReference type="EC" id="3.1.3.25"/>
    </reaction>
</comment>
<comment type="cofactor">
    <cofactor evidence="1">
        <name>Mg(2+)</name>
        <dbReference type="ChEBI" id="CHEBI:18420"/>
    </cofactor>
</comment>
<comment type="pathway">
    <text>Polyol metabolism; myo-inositol biosynthesis; myo-inositol from D-glucose 6-phosphate: step 2/2.</text>
</comment>
<comment type="subcellular location">
    <subcellularLocation>
        <location evidence="3">Membrane</location>
        <topology evidence="3">Single-pass membrane protein</topology>
    </subcellularLocation>
</comment>
<comment type="similarity">
    <text evidence="3">Belongs to the inositol monophosphatase superfamily.</text>
</comment>
<accession>Q2YDR3</accession>
<organism>
    <name type="scientific">Danio rerio</name>
    <name type="common">Zebrafish</name>
    <name type="synonym">Brachydanio rerio</name>
    <dbReference type="NCBI Taxonomy" id="7955"/>
    <lineage>
        <taxon>Eukaryota</taxon>
        <taxon>Metazoa</taxon>
        <taxon>Chordata</taxon>
        <taxon>Craniata</taxon>
        <taxon>Vertebrata</taxon>
        <taxon>Euteleostomi</taxon>
        <taxon>Actinopterygii</taxon>
        <taxon>Neopterygii</taxon>
        <taxon>Teleostei</taxon>
        <taxon>Ostariophysi</taxon>
        <taxon>Cypriniformes</taxon>
        <taxon>Danionidae</taxon>
        <taxon>Danioninae</taxon>
        <taxon>Danio</taxon>
    </lineage>
</organism>
<feature type="chain" id="PRO_0000289043" description="Inositol monophosphatase 3">
    <location>
        <begin position="1"/>
        <end position="341"/>
    </location>
</feature>
<feature type="transmembrane region" description="Helical" evidence="2">
    <location>
        <begin position="11"/>
        <end position="31"/>
    </location>
</feature>
<feature type="binding site" evidence="1">
    <location>
        <position position="117"/>
    </location>
    <ligand>
        <name>Mg(2+)</name>
        <dbReference type="ChEBI" id="CHEBI:18420"/>
        <label>1</label>
    </ligand>
</feature>
<feature type="binding site" evidence="1">
    <location>
        <position position="117"/>
    </location>
    <ligand>
        <name>substrate</name>
    </ligand>
</feature>
<feature type="binding site" evidence="1">
    <location>
        <position position="157"/>
    </location>
    <ligand>
        <name>Mg(2+)</name>
        <dbReference type="ChEBI" id="CHEBI:18420"/>
        <label>1</label>
    </ligand>
</feature>
<feature type="binding site" evidence="1">
    <location>
        <position position="157"/>
    </location>
    <ligand>
        <name>Mg(2+)</name>
        <dbReference type="ChEBI" id="CHEBI:18420"/>
        <label>2</label>
    </ligand>
</feature>
<feature type="binding site" evidence="1">
    <location>
        <begin position="159"/>
        <end position="162"/>
    </location>
    <ligand>
        <name>substrate</name>
    </ligand>
</feature>
<feature type="binding site" evidence="1">
    <location>
        <position position="159"/>
    </location>
    <ligand>
        <name>Mg(2+)</name>
        <dbReference type="ChEBI" id="CHEBI:18420"/>
        <label>1</label>
    </ligand>
</feature>
<feature type="binding site" evidence="1">
    <location>
        <position position="160"/>
    </location>
    <ligand>
        <name>Mg(2+)</name>
        <dbReference type="ChEBI" id="CHEBI:18420"/>
        <label>2</label>
    </ligand>
</feature>
<feature type="binding site" evidence="1">
    <location>
        <position position="283"/>
    </location>
    <ligand>
        <name>Mg(2+)</name>
        <dbReference type="ChEBI" id="CHEBI:18420"/>
        <label>2</label>
    </ligand>
</feature>
<feature type="binding site" evidence="1">
    <location>
        <position position="283"/>
    </location>
    <ligand>
        <name>substrate</name>
    </ligand>
</feature>
<gene>
    <name type="primary">bpnt2</name>
    <name type="synonym">impa3</name>
    <name type="synonym">impad1</name>
    <name type="ORF">zgc:123256</name>
</gene>